<gene>
    <name evidence="1" type="primary">plsY</name>
    <name type="ordered locus">NE0224</name>
</gene>
<organism>
    <name type="scientific">Nitrosomonas europaea (strain ATCC 19718 / CIP 103999 / KCTC 2705 / NBRC 14298)</name>
    <dbReference type="NCBI Taxonomy" id="228410"/>
    <lineage>
        <taxon>Bacteria</taxon>
        <taxon>Pseudomonadati</taxon>
        <taxon>Pseudomonadota</taxon>
        <taxon>Betaproteobacteria</taxon>
        <taxon>Nitrosomonadales</taxon>
        <taxon>Nitrosomonadaceae</taxon>
        <taxon>Nitrosomonas</taxon>
    </lineage>
</organism>
<keyword id="KW-0997">Cell inner membrane</keyword>
<keyword id="KW-1003">Cell membrane</keyword>
<keyword id="KW-0444">Lipid biosynthesis</keyword>
<keyword id="KW-0443">Lipid metabolism</keyword>
<keyword id="KW-0472">Membrane</keyword>
<keyword id="KW-0594">Phospholipid biosynthesis</keyword>
<keyword id="KW-1208">Phospholipid metabolism</keyword>
<keyword id="KW-1185">Reference proteome</keyword>
<keyword id="KW-0808">Transferase</keyword>
<keyword id="KW-0812">Transmembrane</keyword>
<keyword id="KW-1133">Transmembrane helix</keyword>
<sequence>MITVVLIFSAYLLGSISFAVVASWLFKLPDPRSYGSRNPGATNVLRTGKKAAAAVTLLGDAGKGWVAVAAAKYGGEVWELGDEVIAGAALAVFLGHLFPIFLAFKGGKGVATSAGILLGLNPWLGVLTISTWMVVALVSRISSLSALLSALLAPLYAYFLLEKGILIMAVSIISVLLILKHRLNIANLMAGKEARIGKSS</sequence>
<proteinExistence type="inferred from homology"/>
<dbReference type="EC" id="2.3.1.275" evidence="1"/>
<dbReference type="EMBL" id="AL954747">
    <property type="protein sequence ID" value="CAD84135.1"/>
    <property type="molecule type" value="Genomic_DNA"/>
</dbReference>
<dbReference type="RefSeq" id="WP_011110869.1">
    <property type="nucleotide sequence ID" value="NC_004757.1"/>
</dbReference>
<dbReference type="SMR" id="Q82XN3"/>
<dbReference type="STRING" id="228410.NE0224"/>
<dbReference type="GeneID" id="87103431"/>
<dbReference type="KEGG" id="neu:NE0224"/>
<dbReference type="eggNOG" id="COG0344">
    <property type="taxonomic scope" value="Bacteria"/>
</dbReference>
<dbReference type="HOGENOM" id="CLU_081254_0_0_4"/>
<dbReference type="OrthoDB" id="9777124at2"/>
<dbReference type="PhylomeDB" id="Q82XN3"/>
<dbReference type="UniPathway" id="UPA00085"/>
<dbReference type="Proteomes" id="UP000001416">
    <property type="component" value="Chromosome"/>
</dbReference>
<dbReference type="GO" id="GO:0005886">
    <property type="term" value="C:plasma membrane"/>
    <property type="evidence" value="ECO:0007669"/>
    <property type="project" value="UniProtKB-SubCell"/>
</dbReference>
<dbReference type="GO" id="GO:0043772">
    <property type="term" value="F:acyl-phosphate glycerol-3-phosphate acyltransferase activity"/>
    <property type="evidence" value="ECO:0007669"/>
    <property type="project" value="UniProtKB-UniRule"/>
</dbReference>
<dbReference type="GO" id="GO:0008654">
    <property type="term" value="P:phospholipid biosynthetic process"/>
    <property type="evidence" value="ECO:0007669"/>
    <property type="project" value="UniProtKB-UniRule"/>
</dbReference>
<dbReference type="HAMAP" id="MF_01043">
    <property type="entry name" value="PlsY"/>
    <property type="match status" value="1"/>
</dbReference>
<dbReference type="InterPro" id="IPR003811">
    <property type="entry name" value="G3P_acylTferase_PlsY"/>
</dbReference>
<dbReference type="NCBIfam" id="TIGR00023">
    <property type="entry name" value="glycerol-3-phosphate 1-O-acyltransferase PlsY"/>
    <property type="match status" value="1"/>
</dbReference>
<dbReference type="PANTHER" id="PTHR30309:SF0">
    <property type="entry name" value="GLYCEROL-3-PHOSPHATE ACYLTRANSFERASE-RELATED"/>
    <property type="match status" value="1"/>
</dbReference>
<dbReference type="PANTHER" id="PTHR30309">
    <property type="entry name" value="INNER MEMBRANE PROTEIN YGIH"/>
    <property type="match status" value="1"/>
</dbReference>
<dbReference type="Pfam" id="PF02660">
    <property type="entry name" value="G3P_acyltransf"/>
    <property type="match status" value="1"/>
</dbReference>
<dbReference type="SMART" id="SM01207">
    <property type="entry name" value="G3P_acyltransf"/>
    <property type="match status" value="1"/>
</dbReference>
<feature type="chain" id="PRO_0000188414" description="Glycerol-3-phosphate acyltransferase">
    <location>
        <begin position="1"/>
        <end position="200"/>
    </location>
</feature>
<feature type="transmembrane region" description="Helical" evidence="1">
    <location>
        <begin position="1"/>
        <end position="21"/>
    </location>
</feature>
<feature type="transmembrane region" description="Helical" evidence="1">
    <location>
        <begin position="84"/>
        <end position="104"/>
    </location>
</feature>
<feature type="transmembrane region" description="Helical" evidence="1">
    <location>
        <begin position="116"/>
        <end position="136"/>
    </location>
</feature>
<feature type="transmembrane region" description="Helical" evidence="1">
    <location>
        <begin position="159"/>
        <end position="179"/>
    </location>
</feature>
<accession>Q82XN3</accession>
<evidence type="ECO:0000255" key="1">
    <source>
        <dbReference type="HAMAP-Rule" id="MF_01043"/>
    </source>
</evidence>
<name>PLSY_NITEU</name>
<protein>
    <recommendedName>
        <fullName evidence="1">Glycerol-3-phosphate acyltransferase</fullName>
    </recommendedName>
    <alternativeName>
        <fullName evidence="1">Acyl-PO4 G3P acyltransferase</fullName>
    </alternativeName>
    <alternativeName>
        <fullName evidence="1">Acyl-phosphate--glycerol-3-phosphate acyltransferase</fullName>
    </alternativeName>
    <alternativeName>
        <fullName evidence="1">G3P acyltransferase</fullName>
        <shortName evidence="1">GPAT</shortName>
        <ecNumber evidence="1">2.3.1.275</ecNumber>
    </alternativeName>
    <alternativeName>
        <fullName evidence="1">Lysophosphatidic acid synthase</fullName>
        <shortName evidence="1">LPA synthase</shortName>
    </alternativeName>
</protein>
<reference key="1">
    <citation type="journal article" date="2003" name="J. Bacteriol.">
        <title>Complete genome sequence of the ammonia-oxidizing bacterium and obligate chemolithoautotroph Nitrosomonas europaea.</title>
        <authorList>
            <person name="Chain P."/>
            <person name="Lamerdin J.E."/>
            <person name="Larimer F.W."/>
            <person name="Regala W."/>
            <person name="Lao V."/>
            <person name="Land M.L."/>
            <person name="Hauser L."/>
            <person name="Hooper A.B."/>
            <person name="Klotz M.G."/>
            <person name="Norton J."/>
            <person name="Sayavedra-Soto L.A."/>
            <person name="Arciero D.M."/>
            <person name="Hommes N.G."/>
            <person name="Whittaker M.M."/>
            <person name="Arp D.J."/>
        </authorList>
    </citation>
    <scope>NUCLEOTIDE SEQUENCE [LARGE SCALE GENOMIC DNA]</scope>
    <source>
        <strain>ATCC 19718 / CIP 103999 / KCTC 2705 / NBRC 14298</strain>
    </source>
</reference>
<comment type="function">
    <text evidence="1">Catalyzes the transfer of an acyl group from acyl-phosphate (acyl-PO(4)) to glycerol-3-phosphate (G3P) to form lysophosphatidic acid (LPA). This enzyme utilizes acyl-phosphate as fatty acyl donor, but not acyl-CoA or acyl-ACP.</text>
</comment>
<comment type="catalytic activity">
    <reaction evidence="1">
        <text>an acyl phosphate + sn-glycerol 3-phosphate = a 1-acyl-sn-glycero-3-phosphate + phosphate</text>
        <dbReference type="Rhea" id="RHEA:34075"/>
        <dbReference type="ChEBI" id="CHEBI:43474"/>
        <dbReference type="ChEBI" id="CHEBI:57597"/>
        <dbReference type="ChEBI" id="CHEBI:57970"/>
        <dbReference type="ChEBI" id="CHEBI:59918"/>
        <dbReference type="EC" id="2.3.1.275"/>
    </reaction>
</comment>
<comment type="pathway">
    <text evidence="1">Lipid metabolism; phospholipid metabolism.</text>
</comment>
<comment type="subunit">
    <text evidence="1">Probably interacts with PlsX.</text>
</comment>
<comment type="subcellular location">
    <subcellularLocation>
        <location evidence="1">Cell inner membrane</location>
        <topology evidence="1">Multi-pass membrane protein</topology>
    </subcellularLocation>
</comment>
<comment type="similarity">
    <text evidence="1">Belongs to the PlsY family.</text>
</comment>